<reference key="1">
    <citation type="journal article" date="1999" name="Immunogenetics">
        <title>The cattle interleukin-13 gene: genomic organization, chromosomal location, and evolution of the promoter.</title>
        <authorList>
            <person name="Buitkamp J."/>
            <person name="Jann O."/>
            <person name="Fries R."/>
        </authorList>
    </citation>
    <scope>NUCLEOTIDE SEQUENCE [GENOMIC DNA]</scope>
</reference>
<reference key="2">
    <citation type="submission" date="2007-11" db="EMBL/GenBank/DDBJ databases">
        <title>U.S. veterinary immune reagent network: expressed bovine gene sequences.</title>
        <authorList>
            <consortium name="U.S. Veterinary Immune Reagent Network"/>
            <person name="Hudgens T."/>
            <person name="Tompkins D."/>
            <person name="Baldwin C.L."/>
        </authorList>
    </citation>
    <scope>NUCLEOTIDE SEQUENCE [LARGE SCALE MRNA]</scope>
    <source>
        <strain>Belted Galloway</strain>
        <tissue>Peripheral blood</tissue>
    </source>
</reference>
<reference key="3">
    <citation type="submission" date="1998-06" db="EMBL/GenBank/DDBJ databases">
        <title>Biological activities of interleukin-13 (IL-13) on bovine lymphocytes: implications for signaling through IL-13Ra1.</title>
        <authorList>
            <person name="Trigona W.T."/>
            <person name="Hirano A."/>
            <person name="Brown W."/>
        </authorList>
    </citation>
    <scope>NUCLEOTIDE SEQUENCE [MRNA] OF 1-114</scope>
</reference>
<feature type="signal peptide" evidence="5">
    <location>
        <begin position="1"/>
        <end position="18"/>
    </location>
</feature>
<feature type="chain" id="PRO_0000015545" description="Interleukin-13">
    <location>
        <begin position="19"/>
        <end position="132"/>
    </location>
</feature>
<feature type="glycosylation site" description="N-linked (GlcNAc...) asparagine" evidence="5">
    <location>
        <position position="38"/>
    </location>
</feature>
<feature type="glycosylation site" description="N-linked (GlcNAc...) asparagine" evidence="5">
    <location>
        <position position="49"/>
    </location>
</feature>
<feature type="glycosylation site" description="N-linked (GlcNAc...) asparagine" evidence="5">
    <location>
        <position position="57"/>
    </location>
</feature>
<feature type="glycosylation site" description="N-linked (GlcNAc...) asparagine" evidence="5">
    <location>
        <position position="75"/>
    </location>
</feature>
<feature type="disulfide bond" evidence="3">
    <location>
        <begin position="48"/>
        <end position="76"/>
    </location>
</feature>
<feature type="disulfide bond" evidence="3">
    <location>
        <begin position="64"/>
        <end position="90"/>
    </location>
</feature>
<feature type="sequence conflict" description="In Ref. 1; CAB46636." evidence="6" ref="1">
    <original>R</original>
    <variation>K</variation>
    <location>
        <position position="84"/>
    </location>
</feature>
<protein>
    <recommendedName>
        <fullName>Interleukin-13</fullName>
        <shortName>IL-13</shortName>
    </recommendedName>
</protein>
<organism>
    <name type="scientific">Bos taurus</name>
    <name type="common">Bovine</name>
    <dbReference type="NCBI Taxonomy" id="9913"/>
    <lineage>
        <taxon>Eukaryota</taxon>
        <taxon>Metazoa</taxon>
        <taxon>Chordata</taxon>
        <taxon>Craniata</taxon>
        <taxon>Vertebrata</taxon>
        <taxon>Euteleostomi</taxon>
        <taxon>Mammalia</taxon>
        <taxon>Eutheria</taxon>
        <taxon>Laurasiatheria</taxon>
        <taxon>Artiodactyla</taxon>
        <taxon>Ruminantia</taxon>
        <taxon>Pecora</taxon>
        <taxon>Bovidae</taxon>
        <taxon>Bovinae</taxon>
        <taxon>Bos</taxon>
    </lineage>
</organism>
<dbReference type="EMBL" id="AJ132441">
    <property type="protein sequence ID" value="CAB46636.1"/>
    <property type="molecule type" value="Genomic_DNA"/>
</dbReference>
<dbReference type="EMBL" id="EU276077">
    <property type="protein sequence ID" value="ABX72075.1"/>
    <property type="molecule type" value="mRNA"/>
</dbReference>
<dbReference type="EMBL" id="AF072807">
    <property type="protein sequence ID" value="AAD22748.1"/>
    <property type="molecule type" value="mRNA"/>
</dbReference>
<dbReference type="RefSeq" id="NP_776514.1">
    <property type="nucleotide sequence ID" value="NM_174089.1"/>
</dbReference>
<dbReference type="SMR" id="Q9XSV9"/>
<dbReference type="FunCoup" id="Q9XSV9">
    <property type="interactions" value="153"/>
</dbReference>
<dbReference type="STRING" id="9913.ENSBTAP00000021212"/>
<dbReference type="GlyCosmos" id="Q9XSV9">
    <property type="glycosylation" value="4 sites, No reported glycans"/>
</dbReference>
<dbReference type="GlyGen" id="Q9XSV9">
    <property type="glycosylation" value="4 sites"/>
</dbReference>
<dbReference type="PaxDb" id="9913-ENSBTAP00000021212"/>
<dbReference type="Ensembl" id="ENSBTAT00000021212.4">
    <property type="protein sequence ID" value="ENSBTAP00000021212.2"/>
    <property type="gene ID" value="ENSBTAG00000015953.4"/>
</dbReference>
<dbReference type="GeneID" id="281247"/>
<dbReference type="KEGG" id="bta:281247"/>
<dbReference type="CTD" id="3596"/>
<dbReference type="VEuPathDB" id="HostDB:ENSBTAG00000015953"/>
<dbReference type="VGNC" id="VGNC:30114">
    <property type="gene designation" value="IL13"/>
</dbReference>
<dbReference type="eggNOG" id="ENOG502SZKX">
    <property type="taxonomic scope" value="Eukaryota"/>
</dbReference>
<dbReference type="GeneTree" id="ENSGT00390000003225"/>
<dbReference type="HOGENOM" id="CLU_158063_0_0_1"/>
<dbReference type="InParanoid" id="Q9XSV9"/>
<dbReference type="OMA" id="KTPLCNG"/>
<dbReference type="OrthoDB" id="9447464at2759"/>
<dbReference type="TreeFam" id="TF336383"/>
<dbReference type="Reactome" id="R-BTA-6785807">
    <property type="pathway name" value="Interleukin-4 and Interleukin-13 signaling"/>
</dbReference>
<dbReference type="Proteomes" id="UP000009136">
    <property type="component" value="Chromosome 7"/>
</dbReference>
<dbReference type="Bgee" id="ENSBTAG00000015953">
    <property type="expression patterns" value="Expressed in anterior segment of eyeball and 12 other cell types or tissues"/>
</dbReference>
<dbReference type="GO" id="GO:0005737">
    <property type="term" value="C:cytoplasm"/>
    <property type="evidence" value="ECO:0007669"/>
    <property type="project" value="Ensembl"/>
</dbReference>
<dbReference type="GO" id="GO:0009897">
    <property type="term" value="C:external side of plasma membrane"/>
    <property type="evidence" value="ECO:0007669"/>
    <property type="project" value="Ensembl"/>
</dbReference>
<dbReference type="GO" id="GO:0005615">
    <property type="term" value="C:extracellular space"/>
    <property type="evidence" value="ECO:0000318"/>
    <property type="project" value="GO_Central"/>
</dbReference>
<dbReference type="GO" id="GO:0005125">
    <property type="term" value="F:cytokine activity"/>
    <property type="evidence" value="ECO:0007669"/>
    <property type="project" value="UniProtKB-KW"/>
</dbReference>
<dbReference type="GO" id="GO:0005144">
    <property type="term" value="F:interleukin-13 receptor binding"/>
    <property type="evidence" value="ECO:0000318"/>
    <property type="project" value="GO_Central"/>
</dbReference>
<dbReference type="GO" id="GO:0006955">
    <property type="term" value="P:immune response"/>
    <property type="evidence" value="ECO:0007669"/>
    <property type="project" value="InterPro"/>
</dbReference>
<dbReference type="GO" id="GO:0006954">
    <property type="term" value="P:inflammatory response"/>
    <property type="evidence" value="ECO:0000318"/>
    <property type="project" value="GO_Central"/>
</dbReference>
<dbReference type="GO" id="GO:0035772">
    <property type="term" value="P:interleukin-13-mediated signaling pathway"/>
    <property type="evidence" value="ECO:0007669"/>
    <property type="project" value="Ensembl"/>
</dbReference>
<dbReference type="GO" id="GO:0042116">
    <property type="term" value="P:macrophage activation"/>
    <property type="evidence" value="ECO:0007669"/>
    <property type="project" value="Ensembl"/>
</dbReference>
<dbReference type="GO" id="GO:1903660">
    <property type="term" value="P:negative regulation of complement-dependent cytotoxicity"/>
    <property type="evidence" value="ECO:0007669"/>
    <property type="project" value="Ensembl"/>
</dbReference>
<dbReference type="GO" id="GO:2000352">
    <property type="term" value="P:negative regulation of endothelial cell apoptotic process"/>
    <property type="evidence" value="ECO:0007669"/>
    <property type="project" value="Ensembl"/>
</dbReference>
<dbReference type="GO" id="GO:0050728">
    <property type="term" value="P:negative regulation of inflammatory response"/>
    <property type="evidence" value="ECO:0007669"/>
    <property type="project" value="Ensembl"/>
</dbReference>
<dbReference type="GO" id="GO:0120162">
    <property type="term" value="P:positive regulation of cold-induced thermogenesis"/>
    <property type="evidence" value="ECO:0007669"/>
    <property type="project" value="Ensembl"/>
</dbReference>
<dbReference type="GO" id="GO:0002639">
    <property type="term" value="P:positive regulation of immunoglobulin production"/>
    <property type="evidence" value="ECO:0000318"/>
    <property type="project" value="GO_Central"/>
</dbReference>
<dbReference type="GO" id="GO:0032733">
    <property type="term" value="P:positive regulation of interleukin-10 production"/>
    <property type="evidence" value="ECO:0007669"/>
    <property type="project" value="Ensembl"/>
</dbReference>
<dbReference type="GO" id="GO:0043032">
    <property type="term" value="P:positive regulation of macrophage activation"/>
    <property type="evidence" value="ECO:0007669"/>
    <property type="project" value="Ensembl"/>
</dbReference>
<dbReference type="GO" id="GO:0043306">
    <property type="term" value="P:positive regulation of mast cell degranulation"/>
    <property type="evidence" value="ECO:0007669"/>
    <property type="project" value="Ensembl"/>
</dbReference>
<dbReference type="GO" id="GO:0045944">
    <property type="term" value="P:positive regulation of transcription by RNA polymerase II"/>
    <property type="evidence" value="ECO:0007669"/>
    <property type="project" value="Ensembl"/>
</dbReference>
<dbReference type="GO" id="GO:0009624">
    <property type="term" value="P:response to nematode"/>
    <property type="evidence" value="ECO:0007669"/>
    <property type="project" value="Ensembl"/>
</dbReference>
<dbReference type="GO" id="GO:0010269">
    <property type="term" value="P:response to selenium ion"/>
    <property type="evidence" value="ECO:0007669"/>
    <property type="project" value="Ensembl"/>
</dbReference>
<dbReference type="FunFam" id="1.20.1250.10:FF:000029">
    <property type="entry name" value="Interleukin-13"/>
    <property type="match status" value="1"/>
</dbReference>
<dbReference type="Gene3D" id="1.20.1250.10">
    <property type="match status" value="1"/>
</dbReference>
<dbReference type="InterPro" id="IPR009079">
    <property type="entry name" value="4_helix_cytokine-like_core"/>
</dbReference>
<dbReference type="InterPro" id="IPR020470">
    <property type="entry name" value="IL-13"/>
</dbReference>
<dbReference type="InterPro" id="IPR001325">
    <property type="entry name" value="IL-4/IL-13"/>
</dbReference>
<dbReference type="InterPro" id="IPR018096">
    <property type="entry name" value="IL-4/IL-13_CS"/>
</dbReference>
<dbReference type="PANTHER" id="PTHR48486">
    <property type="entry name" value="INTERLEUKIN-13"/>
    <property type="match status" value="1"/>
</dbReference>
<dbReference type="PANTHER" id="PTHR48486:SF1">
    <property type="entry name" value="INTERLEUKIN-13"/>
    <property type="match status" value="1"/>
</dbReference>
<dbReference type="Pfam" id="PF03487">
    <property type="entry name" value="IL13"/>
    <property type="match status" value="1"/>
</dbReference>
<dbReference type="PRINTS" id="PR01929">
    <property type="entry name" value="INTRLEUKIN13"/>
</dbReference>
<dbReference type="SMART" id="SM00190">
    <property type="entry name" value="IL4_13"/>
    <property type="match status" value="1"/>
</dbReference>
<dbReference type="SUPFAM" id="SSF47266">
    <property type="entry name" value="4-helical cytokines"/>
    <property type="match status" value="1"/>
</dbReference>
<dbReference type="PROSITE" id="PS00838">
    <property type="entry name" value="INTERLEUKIN_4_13"/>
    <property type="match status" value="1"/>
</dbReference>
<gene>
    <name type="primary">IL13</name>
</gene>
<sequence>MALLLTAVIVLICFGGLTSPSPVPSATALKELIEELVNITQNQKVPLCNGSMVWSLNLTSSMYCAALDSLISISNCSVIQRTKRMLNALCPHKPSAKQVSSEYVRDTKIEVAQFLKDLLRHSRIVFRNERFN</sequence>
<keyword id="KW-0202">Cytokine</keyword>
<keyword id="KW-1015">Disulfide bond</keyword>
<keyword id="KW-0325">Glycoprotein</keyword>
<keyword id="KW-1185">Reference proteome</keyword>
<keyword id="KW-0964">Secreted</keyword>
<keyword id="KW-0732">Signal</keyword>
<comment type="function">
    <text evidence="2 3 4">Cytokine that plays important roles in allergic inflammation and immune response to parasite infection. Synergizes with IL2 in regulating interferon-gamma synthesis. Stimulates B-cell proliferation, and activation of eosinophils, basophils, and mast cells (By similarity). Plays an important role in controlling IL33 activity by modulating the production of transmembrane and soluble forms of interleukin-1 receptor-like 1/IL1RL1 (By similarity). Displays the capacity to antagonize Th1-driven proinflammatory immune response and downregulates synthesis of many proinflammatory cytokines including IL1, IL6, IL10, IL12 and TNF-alpha through a mechanism that partially involves suppression of NF-kappa-B (By similarity). Also functions on nonhematopoietic cells, including endothelial cells where it induces vascular cell adhesion protein 1/VCAM1, which is important in the recruitment of eosinophils. Exerts its biological effects through its receptors which comprises the IL4R chain and the IL13RA1 chain, to activate JAK1 and TYK2, leading to the activation of STAT6. Aside from IL13RA1, another receptor IL13RA2 acts as a high affinity decoy for IL13 and mediates internalization and depletion of extracellular IL13 (By similarity).</text>
</comment>
<comment type="subunit">
    <text evidence="1">Interacts with IL13RA2.</text>
</comment>
<comment type="subcellular location">
    <subcellularLocation>
        <location>Secreted</location>
    </subcellularLocation>
</comment>
<comment type="similarity">
    <text evidence="6">Belongs to the IL-4/IL-13 family.</text>
</comment>
<name>IL13_BOVIN</name>
<accession>Q9XSV9</accession>
<accession>A9QWR5</accession>
<accession>Q9TV84</accession>
<proteinExistence type="evidence at transcript level"/>
<evidence type="ECO:0000250" key="1"/>
<evidence type="ECO:0000250" key="2">
    <source>
        <dbReference type="UniProtKB" id="P20109"/>
    </source>
</evidence>
<evidence type="ECO:0000250" key="3">
    <source>
        <dbReference type="UniProtKB" id="P35225"/>
    </source>
</evidence>
<evidence type="ECO:0000250" key="4">
    <source>
        <dbReference type="UniProtKB" id="P42203"/>
    </source>
</evidence>
<evidence type="ECO:0000255" key="5"/>
<evidence type="ECO:0000305" key="6"/>